<sequence length="179" mass="19491">MNQLDLIKSSIKSIPDYPKAGIIFRDITSLLEVPEAFKATVDAIVAEFKDKGITKVVGTESRGFIFGAPVALALGVPFVLVRKPKKLPRAVISQSYALEYGEDTLEIHLDSVKENDNVLMVDDLLATGGTIDATAKLIRRLGGKVEHAAFVIWLPDLGGKERLEKEGINSFTLVEFAGH</sequence>
<keyword id="KW-0963">Cytoplasm</keyword>
<keyword id="KW-0328">Glycosyltransferase</keyword>
<keyword id="KW-0660">Purine salvage</keyword>
<keyword id="KW-0808">Transferase</keyword>
<comment type="function">
    <text evidence="1">Catalyzes a salvage reaction resulting in the formation of AMP, that is energically less costly than de novo synthesis.</text>
</comment>
<comment type="catalytic activity">
    <reaction evidence="1">
        <text>AMP + diphosphate = 5-phospho-alpha-D-ribose 1-diphosphate + adenine</text>
        <dbReference type="Rhea" id="RHEA:16609"/>
        <dbReference type="ChEBI" id="CHEBI:16708"/>
        <dbReference type="ChEBI" id="CHEBI:33019"/>
        <dbReference type="ChEBI" id="CHEBI:58017"/>
        <dbReference type="ChEBI" id="CHEBI:456215"/>
        <dbReference type="EC" id="2.4.2.7"/>
    </reaction>
</comment>
<comment type="pathway">
    <text evidence="1">Purine metabolism; AMP biosynthesis via salvage pathway; AMP from adenine: step 1/1.</text>
</comment>
<comment type="subunit">
    <text evidence="1">Homodimer.</text>
</comment>
<comment type="subcellular location">
    <subcellularLocation>
        <location evidence="1">Cytoplasm</location>
    </subcellularLocation>
</comment>
<comment type="similarity">
    <text evidence="1">Belongs to the purine/pyrimidine phosphoribosyltransferase family.</text>
</comment>
<comment type="sequence caution" evidence="2">
    <conflict type="erroneous initiation">
        <sequence resource="EMBL-CDS" id="ABY68873"/>
    </conflict>
</comment>
<reference key="1">
    <citation type="journal article" date="2008" name="PLoS ONE">
        <title>Genome biology of Actinobacillus pleuropneumoniae JL03, an isolate of serotype 3 prevalent in China.</title>
        <authorList>
            <person name="Xu Z."/>
            <person name="Zhou Y."/>
            <person name="Li L."/>
            <person name="Zhou R."/>
            <person name="Xiao S."/>
            <person name="Wan Y."/>
            <person name="Zhang S."/>
            <person name="Wang K."/>
            <person name="Li W."/>
            <person name="Li L."/>
            <person name="Jin H."/>
            <person name="Kang M."/>
            <person name="Dalai B."/>
            <person name="Li T."/>
            <person name="Liu L."/>
            <person name="Cheng Y."/>
            <person name="Zhang L."/>
            <person name="Xu T."/>
            <person name="Zheng H."/>
            <person name="Pu S."/>
            <person name="Wang B."/>
            <person name="Gu W."/>
            <person name="Zhang X.L."/>
            <person name="Zhu G.-F."/>
            <person name="Wang S."/>
            <person name="Zhao G.-P."/>
            <person name="Chen H."/>
        </authorList>
    </citation>
    <scope>NUCLEOTIDE SEQUENCE [LARGE SCALE GENOMIC DNA]</scope>
    <source>
        <strain>JL03</strain>
    </source>
</reference>
<feature type="chain" id="PRO_0000334708" description="Adenine phosphoribosyltransferase">
    <location>
        <begin position="1"/>
        <end position="179"/>
    </location>
</feature>
<gene>
    <name evidence="1" type="primary">apt</name>
    <name type="ordered locus">APJL_0274</name>
</gene>
<dbReference type="EC" id="2.4.2.7" evidence="1"/>
<dbReference type="EMBL" id="CP000687">
    <property type="protein sequence ID" value="ABY68873.1"/>
    <property type="status" value="ALT_INIT"/>
    <property type="molecule type" value="Genomic_DNA"/>
</dbReference>
<dbReference type="RefSeq" id="WP_005596155.1">
    <property type="nucleotide sequence ID" value="NC_010278.1"/>
</dbReference>
<dbReference type="SMR" id="B0BSS1"/>
<dbReference type="GeneID" id="48598419"/>
<dbReference type="KEGG" id="apj:APJL_0274"/>
<dbReference type="HOGENOM" id="CLU_063339_3_0_6"/>
<dbReference type="UniPathway" id="UPA00588">
    <property type="reaction ID" value="UER00646"/>
</dbReference>
<dbReference type="Proteomes" id="UP000008547">
    <property type="component" value="Chromosome"/>
</dbReference>
<dbReference type="GO" id="GO:0005829">
    <property type="term" value="C:cytosol"/>
    <property type="evidence" value="ECO:0007669"/>
    <property type="project" value="TreeGrafter"/>
</dbReference>
<dbReference type="GO" id="GO:0003999">
    <property type="term" value="F:adenine phosphoribosyltransferase activity"/>
    <property type="evidence" value="ECO:0007669"/>
    <property type="project" value="UniProtKB-UniRule"/>
</dbReference>
<dbReference type="GO" id="GO:0006168">
    <property type="term" value="P:adenine salvage"/>
    <property type="evidence" value="ECO:0007669"/>
    <property type="project" value="InterPro"/>
</dbReference>
<dbReference type="GO" id="GO:0044209">
    <property type="term" value="P:AMP salvage"/>
    <property type="evidence" value="ECO:0007669"/>
    <property type="project" value="UniProtKB-UniRule"/>
</dbReference>
<dbReference type="GO" id="GO:0006166">
    <property type="term" value="P:purine ribonucleoside salvage"/>
    <property type="evidence" value="ECO:0007669"/>
    <property type="project" value="UniProtKB-KW"/>
</dbReference>
<dbReference type="CDD" id="cd06223">
    <property type="entry name" value="PRTases_typeI"/>
    <property type="match status" value="1"/>
</dbReference>
<dbReference type="FunFam" id="3.40.50.2020:FF:000004">
    <property type="entry name" value="Adenine phosphoribosyltransferase"/>
    <property type="match status" value="1"/>
</dbReference>
<dbReference type="Gene3D" id="3.40.50.2020">
    <property type="match status" value="1"/>
</dbReference>
<dbReference type="HAMAP" id="MF_00004">
    <property type="entry name" value="Aden_phosphoribosyltr"/>
    <property type="match status" value="1"/>
</dbReference>
<dbReference type="InterPro" id="IPR005764">
    <property type="entry name" value="Ade_phspho_trans"/>
</dbReference>
<dbReference type="InterPro" id="IPR050120">
    <property type="entry name" value="Adenine_PRTase"/>
</dbReference>
<dbReference type="InterPro" id="IPR000836">
    <property type="entry name" value="PRibTrfase_dom"/>
</dbReference>
<dbReference type="InterPro" id="IPR029057">
    <property type="entry name" value="PRTase-like"/>
</dbReference>
<dbReference type="NCBIfam" id="TIGR01090">
    <property type="entry name" value="apt"/>
    <property type="match status" value="1"/>
</dbReference>
<dbReference type="NCBIfam" id="NF002632">
    <property type="entry name" value="PRK02304.1-1"/>
    <property type="match status" value="1"/>
</dbReference>
<dbReference type="NCBIfam" id="NF002634">
    <property type="entry name" value="PRK02304.1-3"/>
    <property type="match status" value="1"/>
</dbReference>
<dbReference type="NCBIfam" id="NF002636">
    <property type="entry name" value="PRK02304.1-5"/>
    <property type="match status" value="1"/>
</dbReference>
<dbReference type="PANTHER" id="PTHR11776">
    <property type="entry name" value="ADENINE PHOSPHORIBOSYLTRANSFERASE"/>
    <property type="match status" value="1"/>
</dbReference>
<dbReference type="PANTHER" id="PTHR11776:SF7">
    <property type="entry name" value="PHOSPHORIBOSYLTRANSFERASE DOMAIN-CONTAINING PROTEIN"/>
    <property type="match status" value="1"/>
</dbReference>
<dbReference type="Pfam" id="PF00156">
    <property type="entry name" value="Pribosyltran"/>
    <property type="match status" value="1"/>
</dbReference>
<dbReference type="SUPFAM" id="SSF53271">
    <property type="entry name" value="PRTase-like"/>
    <property type="match status" value="1"/>
</dbReference>
<dbReference type="PROSITE" id="PS00103">
    <property type="entry name" value="PUR_PYR_PR_TRANSFER"/>
    <property type="match status" value="1"/>
</dbReference>
<proteinExistence type="inferred from homology"/>
<evidence type="ECO:0000255" key="1">
    <source>
        <dbReference type="HAMAP-Rule" id="MF_00004"/>
    </source>
</evidence>
<evidence type="ECO:0000305" key="2"/>
<name>APT_ACTPJ</name>
<protein>
    <recommendedName>
        <fullName evidence="1">Adenine phosphoribosyltransferase</fullName>
        <shortName evidence="1">APRT</shortName>
        <ecNumber evidence="1">2.4.2.7</ecNumber>
    </recommendedName>
</protein>
<organism>
    <name type="scientific">Actinobacillus pleuropneumoniae serotype 3 (strain JL03)</name>
    <dbReference type="NCBI Taxonomy" id="434271"/>
    <lineage>
        <taxon>Bacteria</taxon>
        <taxon>Pseudomonadati</taxon>
        <taxon>Pseudomonadota</taxon>
        <taxon>Gammaproteobacteria</taxon>
        <taxon>Pasteurellales</taxon>
        <taxon>Pasteurellaceae</taxon>
        <taxon>Actinobacillus</taxon>
    </lineage>
</organism>
<accession>B0BSS1</accession>